<accession>B7NFY3</accession>
<proteinExistence type="inferred from homology"/>
<name>UBIC_ECOLU</name>
<organism>
    <name type="scientific">Escherichia coli O17:K52:H18 (strain UMN026 / ExPEC)</name>
    <dbReference type="NCBI Taxonomy" id="585056"/>
    <lineage>
        <taxon>Bacteria</taxon>
        <taxon>Pseudomonadati</taxon>
        <taxon>Pseudomonadota</taxon>
        <taxon>Gammaproteobacteria</taxon>
        <taxon>Enterobacterales</taxon>
        <taxon>Enterobacteriaceae</taxon>
        <taxon>Escherichia</taxon>
    </lineage>
</organism>
<keyword id="KW-0963">Cytoplasm</keyword>
<keyword id="KW-0456">Lyase</keyword>
<keyword id="KW-0670">Pyruvate</keyword>
<keyword id="KW-0831">Ubiquinone biosynthesis</keyword>
<sequence>MSHPALTQLRALRYFKEIPALDTQLLDWLLLEDSMTKRFEQQGKTVSVTMIREGFVEQNEIPEELPLLPKESRYWLREILLCADGEPWLAGRTVVPVSTLSGPELALQKLGKTPLGRYLFTSSTLTRDFIEIGRDAGLWGRRSRLRLSGKPLLLTELFLPASPLY</sequence>
<comment type="function">
    <text evidence="1">Removes the pyruvyl group from chorismate, with concomitant aromatization of the ring, to provide 4-hydroxybenzoate (4HB) for the ubiquinone pathway.</text>
</comment>
<comment type="catalytic activity">
    <reaction evidence="1">
        <text>chorismate = 4-hydroxybenzoate + pyruvate</text>
        <dbReference type="Rhea" id="RHEA:16505"/>
        <dbReference type="ChEBI" id="CHEBI:15361"/>
        <dbReference type="ChEBI" id="CHEBI:17879"/>
        <dbReference type="ChEBI" id="CHEBI:29748"/>
        <dbReference type="EC" id="4.1.3.40"/>
    </reaction>
</comment>
<comment type="pathway">
    <text evidence="1">Cofactor biosynthesis; ubiquinone biosynthesis.</text>
</comment>
<comment type="subunit">
    <text evidence="1">Monomer.</text>
</comment>
<comment type="subcellular location">
    <subcellularLocation>
        <location evidence="1">Cytoplasm</location>
    </subcellularLocation>
</comment>
<comment type="similarity">
    <text evidence="1">Belongs to the UbiC family.</text>
</comment>
<gene>
    <name evidence="1" type="primary">ubiC</name>
    <name type="ordered locus">ECUMN_4573</name>
</gene>
<feature type="chain" id="PRO_1000186525" description="Chorismate pyruvate-lyase">
    <location>
        <begin position="1"/>
        <end position="165"/>
    </location>
</feature>
<feature type="binding site" evidence="1">
    <location>
        <position position="35"/>
    </location>
    <ligand>
        <name>substrate</name>
    </ligand>
</feature>
<feature type="binding site" evidence="1">
    <location>
        <position position="77"/>
    </location>
    <ligand>
        <name>substrate</name>
    </ligand>
</feature>
<feature type="binding site" evidence="1">
    <location>
        <position position="115"/>
    </location>
    <ligand>
        <name>substrate</name>
    </ligand>
</feature>
<feature type="binding site" evidence="1">
    <location>
        <position position="156"/>
    </location>
    <ligand>
        <name>substrate</name>
    </ligand>
</feature>
<protein>
    <recommendedName>
        <fullName evidence="1">Chorismate pyruvate-lyase</fullName>
        <shortName evidence="1">CL</shortName>
        <shortName evidence="1">CPL</shortName>
        <ecNumber evidence="1">4.1.3.40</ecNumber>
    </recommendedName>
</protein>
<reference key="1">
    <citation type="journal article" date="2009" name="PLoS Genet.">
        <title>Organised genome dynamics in the Escherichia coli species results in highly diverse adaptive paths.</title>
        <authorList>
            <person name="Touchon M."/>
            <person name="Hoede C."/>
            <person name="Tenaillon O."/>
            <person name="Barbe V."/>
            <person name="Baeriswyl S."/>
            <person name="Bidet P."/>
            <person name="Bingen E."/>
            <person name="Bonacorsi S."/>
            <person name="Bouchier C."/>
            <person name="Bouvet O."/>
            <person name="Calteau A."/>
            <person name="Chiapello H."/>
            <person name="Clermont O."/>
            <person name="Cruveiller S."/>
            <person name="Danchin A."/>
            <person name="Diard M."/>
            <person name="Dossat C."/>
            <person name="Karoui M.E."/>
            <person name="Frapy E."/>
            <person name="Garry L."/>
            <person name="Ghigo J.M."/>
            <person name="Gilles A.M."/>
            <person name="Johnson J."/>
            <person name="Le Bouguenec C."/>
            <person name="Lescat M."/>
            <person name="Mangenot S."/>
            <person name="Martinez-Jehanne V."/>
            <person name="Matic I."/>
            <person name="Nassif X."/>
            <person name="Oztas S."/>
            <person name="Petit M.A."/>
            <person name="Pichon C."/>
            <person name="Rouy Z."/>
            <person name="Ruf C.S."/>
            <person name="Schneider D."/>
            <person name="Tourret J."/>
            <person name="Vacherie B."/>
            <person name="Vallenet D."/>
            <person name="Medigue C."/>
            <person name="Rocha E.P.C."/>
            <person name="Denamur E."/>
        </authorList>
    </citation>
    <scope>NUCLEOTIDE SEQUENCE [LARGE SCALE GENOMIC DNA]</scope>
    <source>
        <strain>UMN026 / ExPEC</strain>
    </source>
</reference>
<dbReference type="EC" id="4.1.3.40" evidence="1"/>
<dbReference type="EMBL" id="CU928163">
    <property type="protein sequence ID" value="CAR15690.1"/>
    <property type="molecule type" value="Genomic_DNA"/>
</dbReference>
<dbReference type="RefSeq" id="WP_001305723.1">
    <property type="nucleotide sequence ID" value="NC_011751.1"/>
</dbReference>
<dbReference type="RefSeq" id="YP_002415180.1">
    <property type="nucleotide sequence ID" value="NC_011751.1"/>
</dbReference>
<dbReference type="SMR" id="B7NFY3"/>
<dbReference type="STRING" id="585056.ECUMN_4573"/>
<dbReference type="KEGG" id="eum:ECUMN_4573"/>
<dbReference type="PATRIC" id="fig|585056.7.peg.4736"/>
<dbReference type="HOGENOM" id="CLU_096824_1_0_6"/>
<dbReference type="UniPathway" id="UPA00232"/>
<dbReference type="Proteomes" id="UP000007097">
    <property type="component" value="Chromosome"/>
</dbReference>
<dbReference type="GO" id="GO:0005829">
    <property type="term" value="C:cytosol"/>
    <property type="evidence" value="ECO:0007669"/>
    <property type="project" value="TreeGrafter"/>
</dbReference>
<dbReference type="GO" id="GO:0008813">
    <property type="term" value="F:chorismate lyase activity"/>
    <property type="evidence" value="ECO:0007669"/>
    <property type="project" value="UniProtKB-UniRule"/>
</dbReference>
<dbReference type="GO" id="GO:0042866">
    <property type="term" value="P:pyruvate biosynthetic process"/>
    <property type="evidence" value="ECO:0007669"/>
    <property type="project" value="UniProtKB-UniRule"/>
</dbReference>
<dbReference type="GO" id="GO:0006744">
    <property type="term" value="P:ubiquinone biosynthetic process"/>
    <property type="evidence" value="ECO:0007669"/>
    <property type="project" value="UniProtKB-UniRule"/>
</dbReference>
<dbReference type="FunFam" id="3.40.1410.10:FF:000002">
    <property type="entry name" value="Chorismate pyruvate-lyase"/>
    <property type="match status" value="1"/>
</dbReference>
<dbReference type="Gene3D" id="3.40.1410.10">
    <property type="entry name" value="Chorismate lyase-like"/>
    <property type="match status" value="1"/>
</dbReference>
<dbReference type="HAMAP" id="MF_01632">
    <property type="entry name" value="UbiC"/>
    <property type="match status" value="1"/>
</dbReference>
<dbReference type="InterPro" id="IPR007440">
    <property type="entry name" value="Chorismate--pyruvate_lyase"/>
</dbReference>
<dbReference type="InterPro" id="IPR028978">
    <property type="entry name" value="Chorismate_lyase_/UTRA_dom_sf"/>
</dbReference>
<dbReference type="NCBIfam" id="NF008656">
    <property type="entry name" value="PRK11655.1"/>
    <property type="match status" value="1"/>
</dbReference>
<dbReference type="PANTHER" id="PTHR38683">
    <property type="entry name" value="CHORISMATE PYRUVATE-LYASE"/>
    <property type="match status" value="1"/>
</dbReference>
<dbReference type="PANTHER" id="PTHR38683:SF1">
    <property type="entry name" value="CHORISMATE PYRUVATE-LYASE"/>
    <property type="match status" value="1"/>
</dbReference>
<dbReference type="Pfam" id="PF04345">
    <property type="entry name" value="Chor_lyase"/>
    <property type="match status" value="1"/>
</dbReference>
<dbReference type="SUPFAM" id="SSF64288">
    <property type="entry name" value="Chorismate lyase-like"/>
    <property type="match status" value="1"/>
</dbReference>
<evidence type="ECO:0000255" key="1">
    <source>
        <dbReference type="HAMAP-Rule" id="MF_01632"/>
    </source>
</evidence>